<accession>A7GAQ4</accession>
<protein>
    <recommendedName>
        <fullName evidence="1">tRNA (guanine-N(7)-)-methyltransferase</fullName>
        <ecNumber evidence="1">2.1.1.33</ecNumber>
    </recommendedName>
    <alternativeName>
        <fullName evidence="1">tRNA (guanine(46)-N(7))-methyltransferase</fullName>
    </alternativeName>
    <alternativeName>
        <fullName evidence="1">tRNA(m7G46)-methyltransferase</fullName>
    </alternativeName>
</protein>
<keyword id="KW-0489">Methyltransferase</keyword>
<keyword id="KW-0949">S-adenosyl-L-methionine</keyword>
<keyword id="KW-0808">Transferase</keyword>
<keyword id="KW-0819">tRNA processing</keyword>
<comment type="function">
    <text evidence="1">Catalyzes the formation of N(7)-methylguanine at position 46 (m7G46) in tRNA.</text>
</comment>
<comment type="catalytic activity">
    <reaction evidence="1">
        <text>guanosine(46) in tRNA + S-adenosyl-L-methionine = N(7)-methylguanosine(46) in tRNA + S-adenosyl-L-homocysteine</text>
        <dbReference type="Rhea" id="RHEA:42708"/>
        <dbReference type="Rhea" id="RHEA-COMP:10188"/>
        <dbReference type="Rhea" id="RHEA-COMP:10189"/>
        <dbReference type="ChEBI" id="CHEBI:57856"/>
        <dbReference type="ChEBI" id="CHEBI:59789"/>
        <dbReference type="ChEBI" id="CHEBI:74269"/>
        <dbReference type="ChEBI" id="CHEBI:74480"/>
        <dbReference type="EC" id="2.1.1.33"/>
    </reaction>
</comment>
<comment type="pathway">
    <text evidence="1">tRNA modification; N(7)-methylguanine-tRNA biosynthesis.</text>
</comment>
<comment type="similarity">
    <text evidence="1">Belongs to the class I-like SAM-binding methyltransferase superfamily. TrmB family.</text>
</comment>
<evidence type="ECO:0000255" key="1">
    <source>
        <dbReference type="HAMAP-Rule" id="MF_01057"/>
    </source>
</evidence>
<sequence length="217" mass="26259">MRLRKKWWARPEIEASDKFAEEPKELRGKWNKEFNNNNDIHLELGCGRGGFISQLVEKNKDINYVGIDLKDEVIVYAIRKVKEKEEEVKREFKNIKFVTMNIMGIAEVFDKNEISKIYINFCNPWPKERHNKRRLTHTKLLTEYKKFLKPNTEIWFKTDDKELFEDSQEYFKESGFNIEYITYDLHNSDFKENIKTEYETKFETMGMKIMFLKARLL</sequence>
<dbReference type="EC" id="2.1.1.33" evidence="1"/>
<dbReference type="EMBL" id="CP000728">
    <property type="protein sequence ID" value="ABS39563.1"/>
    <property type="molecule type" value="Genomic_DNA"/>
</dbReference>
<dbReference type="RefSeq" id="WP_003355768.1">
    <property type="nucleotide sequence ID" value="NC_009699.1"/>
</dbReference>
<dbReference type="SMR" id="A7GAQ4"/>
<dbReference type="GeneID" id="5184754"/>
<dbReference type="KEGG" id="cbf:CLI_0579"/>
<dbReference type="HOGENOM" id="CLU_050910_2_1_9"/>
<dbReference type="UniPathway" id="UPA00989"/>
<dbReference type="Proteomes" id="UP000002410">
    <property type="component" value="Chromosome"/>
</dbReference>
<dbReference type="GO" id="GO:0043527">
    <property type="term" value="C:tRNA methyltransferase complex"/>
    <property type="evidence" value="ECO:0007669"/>
    <property type="project" value="TreeGrafter"/>
</dbReference>
<dbReference type="GO" id="GO:0008176">
    <property type="term" value="F:tRNA (guanine(46)-N7)-methyltransferase activity"/>
    <property type="evidence" value="ECO:0007669"/>
    <property type="project" value="UniProtKB-UniRule"/>
</dbReference>
<dbReference type="FunFam" id="3.40.50.150:FF:000396">
    <property type="entry name" value="tRNA (guanine-N(7)-)-methyltransferase"/>
    <property type="match status" value="1"/>
</dbReference>
<dbReference type="Gene3D" id="3.40.50.150">
    <property type="entry name" value="Vaccinia Virus protein VP39"/>
    <property type="match status" value="1"/>
</dbReference>
<dbReference type="HAMAP" id="MF_01057">
    <property type="entry name" value="tRNA_methyltr_TrmB"/>
    <property type="match status" value="1"/>
</dbReference>
<dbReference type="InterPro" id="IPR029063">
    <property type="entry name" value="SAM-dependent_MTases_sf"/>
</dbReference>
<dbReference type="InterPro" id="IPR003358">
    <property type="entry name" value="tRNA_(Gua-N-7)_MeTrfase_Trmb"/>
</dbReference>
<dbReference type="InterPro" id="IPR055361">
    <property type="entry name" value="tRNA_methyltr_TrmB_bact"/>
</dbReference>
<dbReference type="NCBIfam" id="NF001080">
    <property type="entry name" value="PRK00121.2-2"/>
    <property type="match status" value="1"/>
</dbReference>
<dbReference type="NCBIfam" id="TIGR00091">
    <property type="entry name" value="tRNA (guanosine(46)-N7)-methyltransferase TrmB"/>
    <property type="match status" value="1"/>
</dbReference>
<dbReference type="PANTHER" id="PTHR23417">
    <property type="entry name" value="3-DEOXY-D-MANNO-OCTULOSONIC-ACID TRANSFERASE/TRNA GUANINE-N 7 - -METHYLTRANSFERASE"/>
    <property type="match status" value="1"/>
</dbReference>
<dbReference type="PANTHER" id="PTHR23417:SF14">
    <property type="entry name" value="PENTACOTRIPEPTIDE-REPEAT REGION OF PRORP DOMAIN-CONTAINING PROTEIN"/>
    <property type="match status" value="1"/>
</dbReference>
<dbReference type="Pfam" id="PF02390">
    <property type="entry name" value="Methyltransf_4"/>
    <property type="match status" value="1"/>
</dbReference>
<dbReference type="SUPFAM" id="SSF53335">
    <property type="entry name" value="S-adenosyl-L-methionine-dependent methyltransferases"/>
    <property type="match status" value="1"/>
</dbReference>
<dbReference type="PROSITE" id="PS51625">
    <property type="entry name" value="SAM_MT_TRMB"/>
    <property type="match status" value="1"/>
</dbReference>
<reference key="1">
    <citation type="submission" date="2007-06" db="EMBL/GenBank/DDBJ databases">
        <authorList>
            <person name="Brinkac L.M."/>
            <person name="Daugherty S."/>
            <person name="Dodson R.J."/>
            <person name="Madupu R."/>
            <person name="Brown J.L."/>
            <person name="Bruce D."/>
            <person name="Detter C."/>
            <person name="Munk C."/>
            <person name="Smith L.A."/>
            <person name="Smith T.J."/>
            <person name="White O."/>
            <person name="Brettin T.S."/>
        </authorList>
    </citation>
    <scope>NUCLEOTIDE SEQUENCE [LARGE SCALE GENOMIC DNA]</scope>
    <source>
        <strain>Langeland / NCTC 10281 / Type F</strain>
    </source>
</reference>
<feature type="chain" id="PRO_1000136348" description="tRNA (guanine-N(7)-)-methyltransferase">
    <location>
        <begin position="1"/>
        <end position="217"/>
    </location>
</feature>
<feature type="region of interest" description="Interaction with RNA" evidence="1">
    <location>
        <begin position="129"/>
        <end position="134"/>
    </location>
</feature>
<feature type="binding site" evidence="1">
    <location>
        <position position="43"/>
    </location>
    <ligand>
        <name>S-adenosyl-L-methionine</name>
        <dbReference type="ChEBI" id="CHEBI:59789"/>
    </ligand>
</feature>
<feature type="binding site" evidence="1">
    <location>
        <position position="68"/>
    </location>
    <ligand>
        <name>S-adenosyl-L-methionine</name>
        <dbReference type="ChEBI" id="CHEBI:59789"/>
    </ligand>
</feature>
<feature type="binding site" evidence="1">
    <location>
        <position position="101"/>
    </location>
    <ligand>
        <name>S-adenosyl-L-methionine</name>
        <dbReference type="ChEBI" id="CHEBI:59789"/>
    </ligand>
</feature>
<feature type="binding site" evidence="1">
    <location>
        <position position="123"/>
    </location>
    <ligand>
        <name>S-adenosyl-L-methionine</name>
        <dbReference type="ChEBI" id="CHEBI:59789"/>
    </ligand>
</feature>
<feature type="binding site" evidence="1">
    <location>
        <position position="127"/>
    </location>
    <ligand>
        <name>substrate</name>
    </ligand>
</feature>
<feature type="binding site" evidence="1">
    <location>
        <position position="159"/>
    </location>
    <ligand>
        <name>substrate</name>
    </ligand>
</feature>
<feature type="binding site" evidence="1">
    <location>
        <begin position="196"/>
        <end position="199"/>
    </location>
    <ligand>
        <name>substrate</name>
    </ligand>
</feature>
<proteinExistence type="inferred from homology"/>
<gene>
    <name evidence="1" type="primary">trmB</name>
    <name type="ordered locus">CLI_0579</name>
</gene>
<organism>
    <name type="scientific">Clostridium botulinum (strain Langeland / NCTC 10281 / Type F)</name>
    <dbReference type="NCBI Taxonomy" id="441772"/>
    <lineage>
        <taxon>Bacteria</taxon>
        <taxon>Bacillati</taxon>
        <taxon>Bacillota</taxon>
        <taxon>Clostridia</taxon>
        <taxon>Eubacteriales</taxon>
        <taxon>Clostridiaceae</taxon>
        <taxon>Clostridium</taxon>
    </lineage>
</organism>
<name>TRMB_CLOBL</name>